<reference key="1">
    <citation type="journal article" date="2003" name="Proc. Natl. Acad. Sci. U.S.A.">
        <title>The genome sequence of Clostridium tetani, the causative agent of tetanus disease.</title>
        <authorList>
            <person name="Brueggemann H."/>
            <person name="Baeumer S."/>
            <person name="Fricke W.F."/>
            <person name="Wiezer A."/>
            <person name="Liesegang H."/>
            <person name="Decker I."/>
            <person name="Herzberg C."/>
            <person name="Martinez-Arias R."/>
            <person name="Merkl R."/>
            <person name="Henne A."/>
            <person name="Gottschalk G."/>
        </authorList>
    </citation>
    <scope>NUCLEOTIDE SEQUENCE [LARGE SCALE GENOMIC DNA]</scope>
    <source>
        <strain>Massachusetts / E88</strain>
    </source>
</reference>
<comment type="catalytic activity">
    <reaction evidence="1">
        <text>5-amino-1-(5-phospho-D-ribosyl)imidazole-4-carboxylate + L-aspartate + ATP = (2S)-2-[5-amino-1-(5-phospho-beta-D-ribosyl)imidazole-4-carboxamido]succinate + ADP + phosphate + 2 H(+)</text>
        <dbReference type="Rhea" id="RHEA:22628"/>
        <dbReference type="ChEBI" id="CHEBI:15378"/>
        <dbReference type="ChEBI" id="CHEBI:29991"/>
        <dbReference type="ChEBI" id="CHEBI:30616"/>
        <dbReference type="ChEBI" id="CHEBI:43474"/>
        <dbReference type="ChEBI" id="CHEBI:58443"/>
        <dbReference type="ChEBI" id="CHEBI:77657"/>
        <dbReference type="ChEBI" id="CHEBI:456216"/>
        <dbReference type="EC" id="6.3.2.6"/>
    </reaction>
</comment>
<comment type="pathway">
    <text evidence="1">Purine metabolism; IMP biosynthesis via de novo pathway; 5-amino-1-(5-phospho-D-ribosyl)imidazole-4-carboxamide from 5-amino-1-(5-phospho-D-ribosyl)imidazole-4-carboxylate: step 1/2.</text>
</comment>
<comment type="similarity">
    <text evidence="1">Belongs to the SAICAR synthetase family.</text>
</comment>
<proteinExistence type="inferred from homology"/>
<keyword id="KW-0067">ATP-binding</keyword>
<keyword id="KW-0436">Ligase</keyword>
<keyword id="KW-0547">Nucleotide-binding</keyword>
<keyword id="KW-0658">Purine biosynthesis</keyword>
<keyword id="KW-1185">Reference proteome</keyword>
<sequence length="227" mass="25699">MNVVYKGKTKDVFLLEDGNYLLKFKDDVTGENGVFDPGANSVGLTMEGAGRAALRLTKLFFERLKEEKIPTHYIDSNVEEGTMKVKPAKIFGNGLEVICRYRAVGSFMRRYGMYAKEGQVLDAFVEVTLKDDERQDPPITKDALDMLGILSLREYDILKDLTKKISGIVKDELSKKGIELYDIKLEFGRIDEDNHIALIDEISGGNMRAYKDGEYIEPLDLEKLIIE</sequence>
<gene>
    <name evidence="1" type="primary">purC</name>
    <name type="ordered locus">CTC_01170</name>
</gene>
<name>PUR7_CLOTE</name>
<feature type="chain" id="PRO_0000100819" description="Phosphoribosylaminoimidazole-succinocarboxamide synthase">
    <location>
        <begin position="1"/>
        <end position="227"/>
    </location>
</feature>
<evidence type="ECO:0000255" key="1">
    <source>
        <dbReference type="HAMAP-Rule" id="MF_00137"/>
    </source>
</evidence>
<dbReference type="EC" id="6.3.2.6" evidence="1"/>
<dbReference type="EMBL" id="AE015927">
    <property type="protein sequence ID" value="AAO35743.1"/>
    <property type="molecule type" value="Genomic_DNA"/>
</dbReference>
<dbReference type="RefSeq" id="WP_011099405.1">
    <property type="nucleotide sequence ID" value="NC_004557.1"/>
</dbReference>
<dbReference type="SMR" id="Q895U7"/>
<dbReference type="STRING" id="212717.CTC_01170"/>
<dbReference type="GeneID" id="24253333"/>
<dbReference type="KEGG" id="ctc:CTC_01170"/>
<dbReference type="HOGENOM" id="CLU_061495_0_0_9"/>
<dbReference type="OrthoDB" id="9801549at2"/>
<dbReference type="UniPathway" id="UPA00074">
    <property type="reaction ID" value="UER00131"/>
</dbReference>
<dbReference type="Proteomes" id="UP000001412">
    <property type="component" value="Chromosome"/>
</dbReference>
<dbReference type="GO" id="GO:0005524">
    <property type="term" value="F:ATP binding"/>
    <property type="evidence" value="ECO:0007669"/>
    <property type="project" value="UniProtKB-KW"/>
</dbReference>
<dbReference type="GO" id="GO:0004639">
    <property type="term" value="F:phosphoribosylaminoimidazolesuccinocarboxamide synthase activity"/>
    <property type="evidence" value="ECO:0007669"/>
    <property type="project" value="UniProtKB-UniRule"/>
</dbReference>
<dbReference type="GO" id="GO:0006189">
    <property type="term" value="P:'de novo' IMP biosynthetic process"/>
    <property type="evidence" value="ECO:0007669"/>
    <property type="project" value="UniProtKB-UniRule"/>
</dbReference>
<dbReference type="Gene3D" id="3.30.470.20">
    <property type="entry name" value="ATP-grasp fold, B domain"/>
    <property type="match status" value="1"/>
</dbReference>
<dbReference type="Gene3D" id="3.30.200.20">
    <property type="entry name" value="Phosphorylase Kinase, domain 1"/>
    <property type="match status" value="1"/>
</dbReference>
<dbReference type="HAMAP" id="MF_00137">
    <property type="entry name" value="SAICAR_synth"/>
    <property type="match status" value="1"/>
</dbReference>
<dbReference type="InterPro" id="IPR028923">
    <property type="entry name" value="SAICAR_synt/ADE2_N"/>
</dbReference>
<dbReference type="InterPro" id="IPR050089">
    <property type="entry name" value="SAICAR_synthetase"/>
</dbReference>
<dbReference type="PANTHER" id="PTHR43599">
    <property type="entry name" value="MULTIFUNCTIONAL PROTEIN ADE2"/>
    <property type="match status" value="1"/>
</dbReference>
<dbReference type="PANTHER" id="PTHR43599:SF3">
    <property type="entry name" value="SI:DKEY-6E2.2"/>
    <property type="match status" value="1"/>
</dbReference>
<dbReference type="Pfam" id="PF01259">
    <property type="entry name" value="SAICAR_synt"/>
    <property type="match status" value="1"/>
</dbReference>
<dbReference type="SUPFAM" id="SSF56104">
    <property type="entry name" value="SAICAR synthase-like"/>
    <property type="match status" value="1"/>
</dbReference>
<accession>Q895U7</accession>
<organism>
    <name type="scientific">Clostridium tetani (strain Massachusetts / E88)</name>
    <dbReference type="NCBI Taxonomy" id="212717"/>
    <lineage>
        <taxon>Bacteria</taxon>
        <taxon>Bacillati</taxon>
        <taxon>Bacillota</taxon>
        <taxon>Clostridia</taxon>
        <taxon>Eubacteriales</taxon>
        <taxon>Clostridiaceae</taxon>
        <taxon>Clostridium</taxon>
    </lineage>
</organism>
<protein>
    <recommendedName>
        <fullName evidence="1">Phosphoribosylaminoimidazole-succinocarboxamide synthase</fullName>
        <ecNumber evidence="1">6.3.2.6</ecNumber>
    </recommendedName>
    <alternativeName>
        <fullName evidence="1">SAICAR synthetase</fullName>
    </alternativeName>
</protein>